<protein>
    <recommendedName>
        <fullName evidence="1">Proline--tRNA ligase</fullName>
        <ecNumber evidence="1">6.1.1.15</ecNumber>
    </recommendedName>
    <alternativeName>
        <fullName evidence="1">Prolyl-tRNA synthetase</fullName>
        <shortName evidence="1">ProRS</shortName>
    </alternativeName>
</protein>
<feature type="chain" id="PRO_0000248797" description="Proline--tRNA ligase">
    <location>
        <begin position="1"/>
        <end position="600"/>
    </location>
</feature>
<dbReference type="EC" id="6.1.1.15" evidence="1"/>
<dbReference type="EMBL" id="CP000100">
    <property type="protein sequence ID" value="ABB57989.1"/>
    <property type="status" value="ALT_INIT"/>
    <property type="molecule type" value="Genomic_DNA"/>
</dbReference>
<dbReference type="RefSeq" id="WP_011378253.1">
    <property type="nucleotide sequence ID" value="NZ_JACJTX010000001.1"/>
</dbReference>
<dbReference type="SMR" id="Q31LT0"/>
<dbReference type="STRING" id="1140.Synpcc7942_1959"/>
<dbReference type="PaxDb" id="1140-Synpcc7942_1959"/>
<dbReference type="KEGG" id="syf:Synpcc7942_1959"/>
<dbReference type="eggNOG" id="COG0442">
    <property type="taxonomic scope" value="Bacteria"/>
</dbReference>
<dbReference type="HOGENOM" id="CLU_016739_0_0_3"/>
<dbReference type="OrthoDB" id="9809052at2"/>
<dbReference type="BioCyc" id="SYNEL:SYNPCC7942_1959-MONOMER"/>
<dbReference type="Proteomes" id="UP000889800">
    <property type="component" value="Chromosome"/>
</dbReference>
<dbReference type="GO" id="GO:0005829">
    <property type="term" value="C:cytosol"/>
    <property type="evidence" value="ECO:0007669"/>
    <property type="project" value="TreeGrafter"/>
</dbReference>
<dbReference type="GO" id="GO:0002161">
    <property type="term" value="F:aminoacyl-tRNA deacylase activity"/>
    <property type="evidence" value="ECO:0007669"/>
    <property type="project" value="InterPro"/>
</dbReference>
<dbReference type="GO" id="GO:0005524">
    <property type="term" value="F:ATP binding"/>
    <property type="evidence" value="ECO:0007669"/>
    <property type="project" value="UniProtKB-UniRule"/>
</dbReference>
<dbReference type="GO" id="GO:0004827">
    <property type="term" value="F:proline-tRNA ligase activity"/>
    <property type="evidence" value="ECO:0007669"/>
    <property type="project" value="UniProtKB-UniRule"/>
</dbReference>
<dbReference type="GO" id="GO:0006433">
    <property type="term" value="P:prolyl-tRNA aminoacylation"/>
    <property type="evidence" value="ECO:0007669"/>
    <property type="project" value="UniProtKB-UniRule"/>
</dbReference>
<dbReference type="CDD" id="cd04334">
    <property type="entry name" value="ProRS-INS"/>
    <property type="match status" value="1"/>
</dbReference>
<dbReference type="CDD" id="cd00861">
    <property type="entry name" value="ProRS_anticodon_short"/>
    <property type="match status" value="1"/>
</dbReference>
<dbReference type="CDD" id="cd00779">
    <property type="entry name" value="ProRS_core_prok"/>
    <property type="match status" value="1"/>
</dbReference>
<dbReference type="FunFam" id="3.40.50.800:FF:000011">
    <property type="entry name" value="Proline--tRNA ligase"/>
    <property type="match status" value="1"/>
</dbReference>
<dbReference type="Gene3D" id="3.40.50.800">
    <property type="entry name" value="Anticodon-binding domain"/>
    <property type="match status" value="1"/>
</dbReference>
<dbReference type="Gene3D" id="3.30.930.10">
    <property type="entry name" value="Bira Bifunctional Protein, Domain 2"/>
    <property type="match status" value="2"/>
</dbReference>
<dbReference type="HAMAP" id="MF_01569">
    <property type="entry name" value="Pro_tRNA_synth_type1"/>
    <property type="match status" value="1"/>
</dbReference>
<dbReference type="InterPro" id="IPR002314">
    <property type="entry name" value="aa-tRNA-synt_IIb"/>
</dbReference>
<dbReference type="InterPro" id="IPR006195">
    <property type="entry name" value="aa-tRNA-synth_II"/>
</dbReference>
<dbReference type="InterPro" id="IPR045864">
    <property type="entry name" value="aa-tRNA-synth_II/BPL/LPL"/>
</dbReference>
<dbReference type="InterPro" id="IPR004154">
    <property type="entry name" value="Anticodon-bd"/>
</dbReference>
<dbReference type="InterPro" id="IPR036621">
    <property type="entry name" value="Anticodon-bd_dom_sf"/>
</dbReference>
<dbReference type="InterPro" id="IPR002316">
    <property type="entry name" value="Pro-tRNA-ligase_IIa"/>
</dbReference>
<dbReference type="InterPro" id="IPR004500">
    <property type="entry name" value="Pro-tRNA-synth_IIa_bac-type"/>
</dbReference>
<dbReference type="InterPro" id="IPR023717">
    <property type="entry name" value="Pro-tRNA-Synthase_IIa_type1"/>
</dbReference>
<dbReference type="InterPro" id="IPR050062">
    <property type="entry name" value="Pro-tRNA_synthetase"/>
</dbReference>
<dbReference type="InterPro" id="IPR044140">
    <property type="entry name" value="ProRS_anticodon_short"/>
</dbReference>
<dbReference type="InterPro" id="IPR033730">
    <property type="entry name" value="ProRS_core_prok"/>
</dbReference>
<dbReference type="InterPro" id="IPR036754">
    <property type="entry name" value="YbaK/aa-tRNA-synt-asso_dom_sf"/>
</dbReference>
<dbReference type="InterPro" id="IPR007214">
    <property type="entry name" value="YbaK/aa-tRNA-synth-assoc-dom"/>
</dbReference>
<dbReference type="NCBIfam" id="NF006625">
    <property type="entry name" value="PRK09194.1"/>
    <property type="match status" value="1"/>
</dbReference>
<dbReference type="NCBIfam" id="TIGR00409">
    <property type="entry name" value="proS_fam_II"/>
    <property type="match status" value="1"/>
</dbReference>
<dbReference type="PANTHER" id="PTHR42753">
    <property type="entry name" value="MITOCHONDRIAL RIBOSOME PROTEIN L39/PROLYL-TRNA LIGASE FAMILY MEMBER"/>
    <property type="match status" value="1"/>
</dbReference>
<dbReference type="PANTHER" id="PTHR42753:SF2">
    <property type="entry name" value="PROLINE--TRNA LIGASE"/>
    <property type="match status" value="1"/>
</dbReference>
<dbReference type="Pfam" id="PF03129">
    <property type="entry name" value="HGTP_anticodon"/>
    <property type="match status" value="1"/>
</dbReference>
<dbReference type="Pfam" id="PF00587">
    <property type="entry name" value="tRNA-synt_2b"/>
    <property type="match status" value="1"/>
</dbReference>
<dbReference type="Pfam" id="PF04073">
    <property type="entry name" value="tRNA_edit"/>
    <property type="match status" value="1"/>
</dbReference>
<dbReference type="PRINTS" id="PR01046">
    <property type="entry name" value="TRNASYNTHPRO"/>
</dbReference>
<dbReference type="SUPFAM" id="SSF52954">
    <property type="entry name" value="Class II aaRS ABD-related"/>
    <property type="match status" value="1"/>
</dbReference>
<dbReference type="SUPFAM" id="SSF55681">
    <property type="entry name" value="Class II aaRS and biotin synthetases"/>
    <property type="match status" value="1"/>
</dbReference>
<dbReference type="SUPFAM" id="SSF55826">
    <property type="entry name" value="YbaK/ProRS associated domain"/>
    <property type="match status" value="1"/>
</dbReference>
<dbReference type="PROSITE" id="PS50862">
    <property type="entry name" value="AA_TRNA_LIGASE_II"/>
    <property type="match status" value="1"/>
</dbReference>
<reference key="1">
    <citation type="submission" date="2005-08" db="EMBL/GenBank/DDBJ databases">
        <title>Complete sequence of chromosome 1 of Synechococcus elongatus PCC 7942.</title>
        <authorList>
            <consortium name="US DOE Joint Genome Institute"/>
            <person name="Copeland A."/>
            <person name="Lucas S."/>
            <person name="Lapidus A."/>
            <person name="Barry K."/>
            <person name="Detter J.C."/>
            <person name="Glavina T."/>
            <person name="Hammon N."/>
            <person name="Israni S."/>
            <person name="Pitluck S."/>
            <person name="Schmutz J."/>
            <person name="Larimer F."/>
            <person name="Land M."/>
            <person name="Kyrpides N."/>
            <person name="Lykidis A."/>
            <person name="Golden S."/>
            <person name="Richardson P."/>
        </authorList>
    </citation>
    <scope>NUCLEOTIDE SEQUENCE [LARGE SCALE GENOMIC DNA]</scope>
    <source>
        <strain>ATCC 33912 / PCC 7942 / FACHB-805</strain>
    </source>
</reference>
<name>SYP_SYNE7</name>
<keyword id="KW-0030">Aminoacyl-tRNA synthetase</keyword>
<keyword id="KW-0067">ATP-binding</keyword>
<keyword id="KW-0963">Cytoplasm</keyword>
<keyword id="KW-0436">Ligase</keyword>
<keyword id="KW-0547">Nucleotide-binding</keyword>
<keyword id="KW-0648">Protein biosynthesis</keyword>
<keyword id="KW-1185">Reference proteome</keyword>
<evidence type="ECO:0000255" key="1">
    <source>
        <dbReference type="HAMAP-Rule" id="MF_01569"/>
    </source>
</evidence>
<evidence type="ECO:0000305" key="2"/>
<comment type="function">
    <text evidence="1">Catalyzes the attachment of proline to tRNA(Pro) in a two-step reaction: proline is first activated by ATP to form Pro-AMP and then transferred to the acceptor end of tRNA(Pro). As ProRS can inadvertently accommodate and process non-cognate amino acids such as alanine and cysteine, to avoid such errors it has two additional distinct editing activities against alanine. One activity is designated as 'pretransfer' editing and involves the tRNA(Pro)-independent hydrolysis of activated Ala-AMP. The other activity is designated 'posttransfer' editing and involves deacylation of mischarged Ala-tRNA(Pro). The misacylated Cys-tRNA(Pro) is not edited by ProRS.</text>
</comment>
<comment type="catalytic activity">
    <reaction evidence="1">
        <text>tRNA(Pro) + L-proline + ATP = L-prolyl-tRNA(Pro) + AMP + diphosphate</text>
        <dbReference type="Rhea" id="RHEA:14305"/>
        <dbReference type="Rhea" id="RHEA-COMP:9700"/>
        <dbReference type="Rhea" id="RHEA-COMP:9702"/>
        <dbReference type="ChEBI" id="CHEBI:30616"/>
        <dbReference type="ChEBI" id="CHEBI:33019"/>
        <dbReference type="ChEBI" id="CHEBI:60039"/>
        <dbReference type="ChEBI" id="CHEBI:78442"/>
        <dbReference type="ChEBI" id="CHEBI:78532"/>
        <dbReference type="ChEBI" id="CHEBI:456215"/>
        <dbReference type="EC" id="6.1.1.15"/>
    </reaction>
</comment>
<comment type="subunit">
    <text evidence="1">Homodimer.</text>
</comment>
<comment type="subcellular location">
    <subcellularLocation>
        <location evidence="1">Cytoplasm</location>
    </subcellularLocation>
</comment>
<comment type="domain">
    <text evidence="1">Consists of three domains: the N-terminal catalytic domain, the editing domain and the C-terminal anticodon-binding domain.</text>
</comment>
<comment type="similarity">
    <text evidence="1">Belongs to the class-II aminoacyl-tRNA synthetase family. ProS type 1 subfamily.</text>
</comment>
<comment type="sequence caution" evidence="2">
    <conflict type="erroneous initiation">
        <sequence resource="EMBL-CDS" id="ABB57989"/>
    </conflict>
</comment>
<gene>
    <name evidence="1" type="primary">proS</name>
    <name type="ordered locus">Synpcc7942_1959</name>
</gene>
<accession>Q31LT0</accession>
<organism>
    <name type="scientific">Synechococcus elongatus (strain ATCC 33912 / PCC 7942 / FACHB-805)</name>
    <name type="common">Anacystis nidulans R2</name>
    <dbReference type="NCBI Taxonomy" id="1140"/>
    <lineage>
        <taxon>Bacteria</taxon>
        <taxon>Bacillati</taxon>
        <taxon>Cyanobacteriota</taxon>
        <taxon>Cyanophyceae</taxon>
        <taxon>Synechococcales</taxon>
        <taxon>Synechococcaceae</taxon>
        <taxon>Synechococcus</taxon>
    </lineage>
</organism>
<proteinExistence type="inferred from homology"/>
<sequence length="600" mass="66284">MRLSQMLFVTLREDPAEAEIPSHKLLLRAGYIRRIASGIYAYLPLMWRVLRKVSQIVREEMDATGAQETLLPQLQPAELWQESGRWETYTKAEGIMFSLDDRQQRQLGLGPTHEEVITAVARDLIRSYRQLPQNLYQIQTKFRDEIRPRFGLMRGREFIMKDAYSFHADEESLRQTYAAMDQAYRNIFRRCGLQFRAVEADSGAIGGSASQEFMILADAGEDEILYTEDGRYAANVEKAVSLPAEAIASAFTTFEKRETPGTDTIASLCEFLKADPTQVVKQVLYQAVFDNGKLLPILISIRGDQSVNEIKLTNELTRRAADYGAKTVIALTVPDAEALKKWTAAPLPLGYLGPDLADSAIAVNESIIPKFLRLVDPTAAELQNFVTGANEVNFHVVGANWETNFPKPAVVDLRTALVGDRAQHDSSQVLASARGIEAGHIFQLGLKYSQAMGATFTTENGTEEPLWMGCYGIGVSRVAQAAVEQSYDKDGIIWPVAIAPYQAVVVIPNITDTEQVAAAEKIYADLTAAGIETLLDDRDERAGVKFKDADLIGIPYRIVTGRSLKEGKVEVVQRASKESSVIAVGSVVETVQDWIAAAIV</sequence>